<dbReference type="EMBL" id="AM933173">
    <property type="protein sequence ID" value="CAR38470.1"/>
    <property type="molecule type" value="Genomic_DNA"/>
</dbReference>
<dbReference type="RefSeq" id="WP_000043268.1">
    <property type="nucleotide sequence ID" value="NC_011274.1"/>
</dbReference>
<dbReference type="SMR" id="B5RD84"/>
<dbReference type="KEGG" id="seg:SG2653"/>
<dbReference type="HOGENOM" id="CLU_077636_1_0_6"/>
<dbReference type="Proteomes" id="UP000008321">
    <property type="component" value="Chromosome"/>
</dbReference>
<dbReference type="GO" id="GO:0005737">
    <property type="term" value="C:cytoplasm"/>
    <property type="evidence" value="ECO:0007669"/>
    <property type="project" value="UniProtKB-SubCell"/>
</dbReference>
<dbReference type="GO" id="GO:0005840">
    <property type="term" value="C:ribosome"/>
    <property type="evidence" value="ECO:0007669"/>
    <property type="project" value="InterPro"/>
</dbReference>
<dbReference type="GO" id="GO:0043022">
    <property type="term" value="F:ribosome binding"/>
    <property type="evidence" value="ECO:0007669"/>
    <property type="project" value="InterPro"/>
</dbReference>
<dbReference type="GO" id="GO:0042274">
    <property type="term" value="P:ribosomal small subunit biogenesis"/>
    <property type="evidence" value="ECO:0007669"/>
    <property type="project" value="UniProtKB-UniRule"/>
</dbReference>
<dbReference type="GO" id="GO:0006364">
    <property type="term" value="P:rRNA processing"/>
    <property type="evidence" value="ECO:0007669"/>
    <property type="project" value="UniProtKB-UniRule"/>
</dbReference>
<dbReference type="FunFam" id="2.30.30.240:FF:000001">
    <property type="entry name" value="Ribosome maturation factor RimM"/>
    <property type="match status" value="1"/>
</dbReference>
<dbReference type="FunFam" id="2.40.30.60:FF:000001">
    <property type="entry name" value="Ribosome maturation factor RimM"/>
    <property type="match status" value="1"/>
</dbReference>
<dbReference type="Gene3D" id="2.30.30.240">
    <property type="entry name" value="PRC-barrel domain"/>
    <property type="match status" value="1"/>
</dbReference>
<dbReference type="Gene3D" id="2.40.30.60">
    <property type="entry name" value="RimM"/>
    <property type="match status" value="1"/>
</dbReference>
<dbReference type="HAMAP" id="MF_00014">
    <property type="entry name" value="Ribosome_mat_RimM"/>
    <property type="match status" value="1"/>
</dbReference>
<dbReference type="InterPro" id="IPR011033">
    <property type="entry name" value="PRC_barrel-like_sf"/>
</dbReference>
<dbReference type="InterPro" id="IPR056792">
    <property type="entry name" value="PRC_RimM"/>
</dbReference>
<dbReference type="InterPro" id="IPR011961">
    <property type="entry name" value="RimM"/>
</dbReference>
<dbReference type="InterPro" id="IPR002676">
    <property type="entry name" value="RimM_N"/>
</dbReference>
<dbReference type="InterPro" id="IPR036976">
    <property type="entry name" value="RimM_N_sf"/>
</dbReference>
<dbReference type="InterPro" id="IPR009000">
    <property type="entry name" value="Transl_B-barrel_sf"/>
</dbReference>
<dbReference type="NCBIfam" id="TIGR02273">
    <property type="entry name" value="16S_RimM"/>
    <property type="match status" value="1"/>
</dbReference>
<dbReference type="PANTHER" id="PTHR33692">
    <property type="entry name" value="RIBOSOME MATURATION FACTOR RIMM"/>
    <property type="match status" value="1"/>
</dbReference>
<dbReference type="PANTHER" id="PTHR33692:SF1">
    <property type="entry name" value="RIBOSOME MATURATION FACTOR RIMM"/>
    <property type="match status" value="1"/>
</dbReference>
<dbReference type="Pfam" id="PF24986">
    <property type="entry name" value="PRC_RimM"/>
    <property type="match status" value="1"/>
</dbReference>
<dbReference type="Pfam" id="PF01782">
    <property type="entry name" value="RimM"/>
    <property type="match status" value="1"/>
</dbReference>
<dbReference type="SUPFAM" id="SSF50346">
    <property type="entry name" value="PRC-barrel domain"/>
    <property type="match status" value="1"/>
</dbReference>
<dbReference type="SUPFAM" id="SSF50447">
    <property type="entry name" value="Translation proteins"/>
    <property type="match status" value="1"/>
</dbReference>
<gene>
    <name evidence="1" type="primary">rimM</name>
    <name type="ordered locus">SG2653</name>
</gene>
<evidence type="ECO:0000255" key="1">
    <source>
        <dbReference type="HAMAP-Rule" id="MF_00014"/>
    </source>
</evidence>
<sequence>MSKQLAAQVPAEPVVLGKMGSSYGIRGWLRVFSSTEDAESIFDYQPWFIQKAGQWQQVQLESWKHHNQDLIIKLKGVDDRDAANLLTNCEIVVDSSQLPALEEGDYYWKDLMGCQVVTAEGYDLGKVIDMMETGSNDVLVIKANLKDAFGIKERLVPFLYGQVIKKVDLATRTIEVDWDPGF</sequence>
<proteinExistence type="inferred from homology"/>
<organism>
    <name type="scientific">Salmonella gallinarum (strain 287/91 / NCTC 13346)</name>
    <dbReference type="NCBI Taxonomy" id="550538"/>
    <lineage>
        <taxon>Bacteria</taxon>
        <taxon>Pseudomonadati</taxon>
        <taxon>Pseudomonadota</taxon>
        <taxon>Gammaproteobacteria</taxon>
        <taxon>Enterobacterales</taxon>
        <taxon>Enterobacteriaceae</taxon>
        <taxon>Salmonella</taxon>
    </lineage>
</organism>
<comment type="function">
    <text evidence="1">An accessory protein needed during the final step in the assembly of 30S ribosomal subunit, possibly for assembly of the head region. Essential for efficient processing of 16S rRNA. May be needed both before and after RbfA during the maturation of 16S rRNA. It has affinity for free ribosomal 30S subunits but not for 70S ribosomes.</text>
</comment>
<comment type="subunit">
    <text evidence="1">Binds ribosomal protein uS19.</text>
</comment>
<comment type="subcellular location">
    <subcellularLocation>
        <location evidence="1">Cytoplasm</location>
    </subcellularLocation>
</comment>
<comment type="domain">
    <text evidence="1">The PRC barrel domain binds ribosomal protein uS19.</text>
</comment>
<comment type="similarity">
    <text evidence="1">Belongs to the RimM family.</text>
</comment>
<feature type="chain" id="PRO_1000201813" description="Ribosome maturation factor RimM">
    <location>
        <begin position="1"/>
        <end position="182"/>
    </location>
</feature>
<feature type="domain" description="PRC barrel" evidence="1">
    <location>
        <begin position="102"/>
        <end position="182"/>
    </location>
</feature>
<keyword id="KW-0143">Chaperone</keyword>
<keyword id="KW-0963">Cytoplasm</keyword>
<keyword id="KW-0690">Ribosome biogenesis</keyword>
<keyword id="KW-0698">rRNA processing</keyword>
<name>RIMM_SALG2</name>
<reference key="1">
    <citation type="journal article" date="2008" name="Genome Res.">
        <title>Comparative genome analysis of Salmonella enteritidis PT4 and Salmonella gallinarum 287/91 provides insights into evolutionary and host adaptation pathways.</title>
        <authorList>
            <person name="Thomson N.R."/>
            <person name="Clayton D.J."/>
            <person name="Windhorst D."/>
            <person name="Vernikos G."/>
            <person name="Davidson S."/>
            <person name="Churcher C."/>
            <person name="Quail M.A."/>
            <person name="Stevens M."/>
            <person name="Jones M.A."/>
            <person name="Watson M."/>
            <person name="Barron A."/>
            <person name="Layton A."/>
            <person name="Pickard D."/>
            <person name="Kingsley R.A."/>
            <person name="Bignell A."/>
            <person name="Clark L."/>
            <person name="Harris B."/>
            <person name="Ormond D."/>
            <person name="Abdellah Z."/>
            <person name="Brooks K."/>
            <person name="Cherevach I."/>
            <person name="Chillingworth T."/>
            <person name="Woodward J."/>
            <person name="Norberczak H."/>
            <person name="Lord A."/>
            <person name="Arrowsmith C."/>
            <person name="Jagels K."/>
            <person name="Moule S."/>
            <person name="Mungall K."/>
            <person name="Saunders M."/>
            <person name="Whitehead S."/>
            <person name="Chabalgoity J.A."/>
            <person name="Maskell D."/>
            <person name="Humphreys T."/>
            <person name="Roberts M."/>
            <person name="Barrow P.A."/>
            <person name="Dougan G."/>
            <person name="Parkhill J."/>
        </authorList>
    </citation>
    <scope>NUCLEOTIDE SEQUENCE [LARGE SCALE GENOMIC DNA]</scope>
    <source>
        <strain>287/91 / NCTC 13346</strain>
    </source>
</reference>
<accession>B5RD84</accession>
<protein>
    <recommendedName>
        <fullName evidence="1">Ribosome maturation factor RimM</fullName>
    </recommendedName>
</protein>